<keyword id="KW-0067">ATP-binding</keyword>
<keyword id="KW-0143">Chaperone</keyword>
<keyword id="KW-0963">Cytoplasm</keyword>
<keyword id="KW-0413">Isomerase</keyword>
<keyword id="KW-0547">Nucleotide-binding</keyword>
<sequence length="548" mass="57851">MGAKDVKFGNEARIKMLRGVNVLADAVKVTLGPKGRNVVLDKSFGAPSITKDGVSVAREIELEDKFENMGAQMVKEVASKANDAAGDGTTTATLLAQSIVNEGLKAVAAGMNPMDLKRGIDKAVISAVEELKNLSVPCSDSKAITQVGTISANADEKVGALIAEAMEKVGNDGVITVEEGTGLQNELEVVKGMQFDRGYLSPYFINKPETGIVELENPYILMADKKISNVREMLPILESVAKSGKPLLIISEDLEGEALATLVVNSMRGIVKVAAVKAPGFGDRRKAMLQDISILTGGSVISEELAMDLEKSTLEDLGQAKRVVINKDTTTIIGGSGEKQAIQSRIGQIRQEIQEATSDYDKEKLNERLAKLSGGVAVLKVGAATEVEMKEKKARVEDALHATRAAVEEGVVAGGGVALVRVAGKISNLRGHNEDQNVGIRVALRAMEAPLRQIVSNSGEEPSVVTNNVKDGKGNYGYNAATDEYGDMIDFGILDPTKVTRSALQYAASVAGLMITTECMVTDLPREDKSSDVASSPAGGMGGMGGMM</sequence>
<reference key="1">
    <citation type="submission" date="1996-06" db="EMBL/GenBank/DDBJ databases">
        <title>The nucleotide sequence of 60K, tdhF, groES and groEL genes of Buchnera aphidicola.</title>
        <authorList>
            <person name="Anwarul H.K."/>
            <person name="Moriya S."/>
            <person name="Baumann P."/>
            <person name="Yoshikawa H."/>
            <person name="Ogasawara N."/>
        </authorList>
    </citation>
    <scope>NUCLEOTIDE SEQUENCE [GENOMIC DNA]</scope>
</reference>
<reference key="2">
    <citation type="journal article" date="1998" name="Curr. Microbiol.">
        <title>Sequence analysis of a 34.7-kb DNA segment from the genome of Buchnera aphidicola (endosymbiont of aphids) containing groEL, dnaA, the atp operon, gidA, and rho.</title>
        <authorList>
            <person name="Clark M.A."/>
            <person name="Baumann L."/>
            <person name="Baumann P."/>
        </authorList>
    </citation>
    <scope>NUCLEOTIDE SEQUENCE [GENOMIC DNA]</scope>
</reference>
<reference key="3">
    <citation type="submission" date="2001-10" db="EMBL/GenBank/DDBJ databases">
        <title>Schizaphis graminum endosymbiont GroEL-related molecular chaperonin SymL (symL) gene.</title>
        <authorList>
            <person name="Wu Y."/>
            <person name="Lin L."/>
            <person name="Cui X."/>
        </authorList>
    </citation>
    <scope>NUCLEOTIDE SEQUENCE [GENOMIC DNA]</scope>
</reference>
<reference key="4">
    <citation type="journal article" date="2002" name="Science">
        <title>50 million years of genomic stasis in endosymbiotic bacteria.</title>
        <authorList>
            <person name="Tamas I."/>
            <person name="Klasson L."/>
            <person name="Canbaeck B."/>
            <person name="Naeslund A.K."/>
            <person name="Eriksson A.-S."/>
            <person name="Wernegreen J.J."/>
            <person name="Sandstroem J.P."/>
            <person name="Moran N.A."/>
            <person name="Andersson S.G.E."/>
        </authorList>
    </citation>
    <scope>NUCLEOTIDE SEQUENCE [LARGE SCALE GENOMIC DNA]</scope>
    <source>
        <strain>Sg</strain>
    </source>
</reference>
<organism>
    <name type="scientific">Buchnera aphidicola subsp. Schizaphis graminum (strain Sg)</name>
    <dbReference type="NCBI Taxonomy" id="198804"/>
    <lineage>
        <taxon>Bacteria</taxon>
        <taxon>Pseudomonadati</taxon>
        <taxon>Pseudomonadota</taxon>
        <taxon>Gammaproteobacteria</taxon>
        <taxon>Enterobacterales</taxon>
        <taxon>Erwiniaceae</taxon>
        <taxon>Buchnera</taxon>
    </lineage>
</organism>
<accession>Q59177</accession>
<accession>Q93A25</accession>
<dbReference type="EC" id="5.6.1.7" evidence="1"/>
<dbReference type="EMBL" id="D85628">
    <property type="protein sequence ID" value="BAA12847.1"/>
    <property type="status" value="ALT_INIT"/>
    <property type="molecule type" value="Genomic_DNA"/>
</dbReference>
<dbReference type="EMBL" id="AF008210">
    <property type="protein sequence ID" value="AAC38099.1"/>
    <property type="status" value="ALT_INIT"/>
    <property type="molecule type" value="Genomic_DNA"/>
</dbReference>
<dbReference type="EMBL" id="AF434719">
    <property type="protein sequence ID" value="AAL30419.1"/>
    <property type="molecule type" value="Genomic_DNA"/>
</dbReference>
<dbReference type="EMBL" id="AE013218">
    <property type="protein sequence ID" value="AAM67591.1"/>
    <property type="molecule type" value="Genomic_DNA"/>
</dbReference>
<dbReference type="RefSeq" id="WP_011053557.1">
    <property type="nucleotide sequence ID" value="NC_004061.1"/>
</dbReference>
<dbReference type="SMR" id="Q59177"/>
<dbReference type="STRING" id="198804.BUsg_019"/>
<dbReference type="GeneID" id="93003482"/>
<dbReference type="KEGG" id="bas:BUsg_019"/>
<dbReference type="eggNOG" id="COG0459">
    <property type="taxonomic scope" value="Bacteria"/>
</dbReference>
<dbReference type="HOGENOM" id="CLU_016503_3_0_6"/>
<dbReference type="Proteomes" id="UP000000416">
    <property type="component" value="Chromosome"/>
</dbReference>
<dbReference type="GO" id="GO:0005737">
    <property type="term" value="C:cytoplasm"/>
    <property type="evidence" value="ECO:0007669"/>
    <property type="project" value="UniProtKB-SubCell"/>
</dbReference>
<dbReference type="GO" id="GO:0005524">
    <property type="term" value="F:ATP binding"/>
    <property type="evidence" value="ECO:0007669"/>
    <property type="project" value="UniProtKB-UniRule"/>
</dbReference>
<dbReference type="GO" id="GO:0140662">
    <property type="term" value="F:ATP-dependent protein folding chaperone"/>
    <property type="evidence" value="ECO:0007669"/>
    <property type="project" value="InterPro"/>
</dbReference>
<dbReference type="GO" id="GO:0016853">
    <property type="term" value="F:isomerase activity"/>
    <property type="evidence" value="ECO:0007669"/>
    <property type="project" value="UniProtKB-KW"/>
</dbReference>
<dbReference type="GO" id="GO:0051082">
    <property type="term" value="F:unfolded protein binding"/>
    <property type="evidence" value="ECO:0007669"/>
    <property type="project" value="UniProtKB-UniRule"/>
</dbReference>
<dbReference type="GO" id="GO:0042026">
    <property type="term" value="P:protein refolding"/>
    <property type="evidence" value="ECO:0007669"/>
    <property type="project" value="UniProtKB-UniRule"/>
</dbReference>
<dbReference type="CDD" id="cd03344">
    <property type="entry name" value="GroEL"/>
    <property type="match status" value="1"/>
</dbReference>
<dbReference type="FunFam" id="1.10.560.10:FF:000001">
    <property type="entry name" value="60 kDa chaperonin"/>
    <property type="match status" value="1"/>
</dbReference>
<dbReference type="FunFam" id="3.50.7.10:FF:000001">
    <property type="entry name" value="60 kDa chaperonin"/>
    <property type="match status" value="1"/>
</dbReference>
<dbReference type="Gene3D" id="3.50.7.10">
    <property type="entry name" value="GroEL"/>
    <property type="match status" value="1"/>
</dbReference>
<dbReference type="Gene3D" id="1.10.560.10">
    <property type="entry name" value="GroEL-like equatorial domain"/>
    <property type="match status" value="1"/>
</dbReference>
<dbReference type="Gene3D" id="3.30.260.10">
    <property type="entry name" value="TCP-1-like chaperonin intermediate domain"/>
    <property type="match status" value="1"/>
</dbReference>
<dbReference type="HAMAP" id="MF_00600">
    <property type="entry name" value="CH60"/>
    <property type="match status" value="1"/>
</dbReference>
<dbReference type="InterPro" id="IPR018370">
    <property type="entry name" value="Chaperonin_Cpn60_CS"/>
</dbReference>
<dbReference type="InterPro" id="IPR001844">
    <property type="entry name" value="Cpn60/GroEL"/>
</dbReference>
<dbReference type="InterPro" id="IPR002423">
    <property type="entry name" value="Cpn60/GroEL/TCP-1"/>
</dbReference>
<dbReference type="InterPro" id="IPR027409">
    <property type="entry name" value="GroEL-like_apical_dom_sf"/>
</dbReference>
<dbReference type="InterPro" id="IPR027413">
    <property type="entry name" value="GROEL-like_equatorial_sf"/>
</dbReference>
<dbReference type="InterPro" id="IPR027410">
    <property type="entry name" value="TCP-1-like_intermed_sf"/>
</dbReference>
<dbReference type="NCBIfam" id="TIGR02348">
    <property type="entry name" value="GroEL"/>
    <property type="match status" value="1"/>
</dbReference>
<dbReference type="NCBIfam" id="NF000592">
    <property type="entry name" value="PRK00013.1"/>
    <property type="match status" value="1"/>
</dbReference>
<dbReference type="NCBIfam" id="NF009487">
    <property type="entry name" value="PRK12849.1"/>
    <property type="match status" value="1"/>
</dbReference>
<dbReference type="NCBIfam" id="NF009488">
    <property type="entry name" value="PRK12850.1"/>
    <property type="match status" value="1"/>
</dbReference>
<dbReference type="NCBIfam" id="NF009489">
    <property type="entry name" value="PRK12851.1"/>
    <property type="match status" value="1"/>
</dbReference>
<dbReference type="PANTHER" id="PTHR45633">
    <property type="entry name" value="60 KDA HEAT SHOCK PROTEIN, MITOCHONDRIAL"/>
    <property type="match status" value="1"/>
</dbReference>
<dbReference type="Pfam" id="PF00118">
    <property type="entry name" value="Cpn60_TCP1"/>
    <property type="match status" value="1"/>
</dbReference>
<dbReference type="PRINTS" id="PR00298">
    <property type="entry name" value="CHAPERONIN60"/>
</dbReference>
<dbReference type="SUPFAM" id="SSF52029">
    <property type="entry name" value="GroEL apical domain-like"/>
    <property type="match status" value="1"/>
</dbReference>
<dbReference type="SUPFAM" id="SSF48592">
    <property type="entry name" value="GroEL equatorial domain-like"/>
    <property type="match status" value="1"/>
</dbReference>
<dbReference type="SUPFAM" id="SSF54849">
    <property type="entry name" value="GroEL-intermediate domain like"/>
    <property type="match status" value="1"/>
</dbReference>
<dbReference type="PROSITE" id="PS00296">
    <property type="entry name" value="CHAPERONINS_CPN60"/>
    <property type="match status" value="1"/>
</dbReference>
<gene>
    <name evidence="1" type="primary">groEL</name>
    <name evidence="1" type="synonym">groL</name>
    <name type="synonym">mopA</name>
    <name type="synonym">symL</name>
    <name type="ordered locus">BUsg_019</name>
</gene>
<name>CH60_BUCAP</name>
<comment type="function">
    <text evidence="1">Together with its co-chaperonin GroES, plays an essential role in assisting protein folding. The GroEL-GroES system forms a nano-cage that allows encapsulation of the non-native substrate proteins and provides a physical environment optimized to promote and accelerate protein folding.</text>
</comment>
<comment type="catalytic activity">
    <reaction evidence="1">
        <text>ATP + H2O + a folded polypeptide = ADP + phosphate + an unfolded polypeptide.</text>
        <dbReference type="EC" id="5.6.1.7"/>
    </reaction>
</comment>
<comment type="subunit">
    <text evidence="1">Forms a cylinder of 14 subunits composed of two heptameric rings stacked back-to-back. Interacts with the co-chaperonin GroES.</text>
</comment>
<comment type="subcellular location">
    <subcellularLocation>
        <location evidence="1">Cytoplasm</location>
    </subcellularLocation>
</comment>
<comment type="similarity">
    <text evidence="1">Belongs to the chaperonin (HSP60) family.</text>
</comment>
<comment type="sequence caution" evidence="3">
    <conflict type="erroneous initiation">
        <sequence resource="EMBL-CDS" id="AAC38099"/>
    </conflict>
</comment>
<comment type="sequence caution" evidence="3">
    <conflict type="erroneous initiation">
        <sequence resource="EMBL-CDS" id="BAA12847"/>
    </conflict>
</comment>
<feature type="chain" id="PRO_0000063306" description="Chaperonin GroEL">
    <location>
        <begin position="1"/>
        <end position="548"/>
    </location>
</feature>
<feature type="region of interest" description="Disordered" evidence="2">
    <location>
        <begin position="526"/>
        <end position="548"/>
    </location>
</feature>
<feature type="compositionally biased region" description="Gly residues" evidence="2">
    <location>
        <begin position="539"/>
        <end position="548"/>
    </location>
</feature>
<feature type="binding site" evidence="1">
    <location>
        <begin position="30"/>
        <end position="33"/>
    </location>
    <ligand>
        <name>ATP</name>
        <dbReference type="ChEBI" id="CHEBI:30616"/>
    </ligand>
</feature>
<feature type="binding site" evidence="1">
    <location>
        <position position="51"/>
    </location>
    <ligand>
        <name>ATP</name>
        <dbReference type="ChEBI" id="CHEBI:30616"/>
    </ligand>
</feature>
<feature type="binding site" evidence="1">
    <location>
        <begin position="87"/>
        <end position="91"/>
    </location>
    <ligand>
        <name>ATP</name>
        <dbReference type="ChEBI" id="CHEBI:30616"/>
    </ligand>
</feature>
<feature type="binding site" evidence="1">
    <location>
        <position position="415"/>
    </location>
    <ligand>
        <name>ATP</name>
        <dbReference type="ChEBI" id="CHEBI:30616"/>
    </ligand>
</feature>
<feature type="binding site" evidence="1">
    <location>
        <begin position="479"/>
        <end position="481"/>
    </location>
    <ligand>
        <name>ATP</name>
        <dbReference type="ChEBI" id="CHEBI:30616"/>
    </ligand>
</feature>
<feature type="binding site" evidence="1">
    <location>
        <position position="495"/>
    </location>
    <ligand>
        <name>ATP</name>
        <dbReference type="ChEBI" id="CHEBI:30616"/>
    </ligand>
</feature>
<feature type="sequence conflict" description="In Ref. 3; AAL30419." evidence="3" ref="3">
    <original>G</original>
    <variation>A</variation>
    <location>
        <position position="2"/>
    </location>
</feature>
<feature type="sequence conflict" description="In Ref. 3; AAL30419." evidence="3" ref="3">
    <original>TGLQNEL</original>
    <variation>QVFKNER</variation>
    <location>
        <begin position="181"/>
        <end position="187"/>
    </location>
</feature>
<feature type="sequence conflict" description="In Ref. 1 and 2." evidence="3" ref="1 2">
    <original>S</original>
    <variation>P</variation>
    <location>
        <position position="266"/>
    </location>
</feature>
<protein>
    <recommendedName>
        <fullName evidence="1">Chaperonin GroEL</fullName>
        <ecNumber evidence="1">5.6.1.7</ecNumber>
    </recommendedName>
    <alternativeName>
        <fullName evidence="1">60 kDa chaperonin</fullName>
    </alternativeName>
    <alternativeName>
        <fullName evidence="1">Chaperonin-60</fullName>
        <shortName evidence="1">Cpn60</shortName>
    </alternativeName>
</protein>
<proteinExistence type="inferred from homology"/>
<evidence type="ECO:0000255" key="1">
    <source>
        <dbReference type="HAMAP-Rule" id="MF_00600"/>
    </source>
</evidence>
<evidence type="ECO:0000256" key="2">
    <source>
        <dbReference type="SAM" id="MobiDB-lite"/>
    </source>
</evidence>
<evidence type="ECO:0000305" key="3"/>